<feature type="signal peptide" evidence="2">
    <location>
        <begin position="1"/>
        <end position="17"/>
    </location>
</feature>
<feature type="chain" id="PRO_0000259992" description="Putative protein-disulfide oxidoreductase RT0103">
    <location>
        <begin position="18"/>
        <end position="270"/>
    </location>
</feature>
<feature type="domain" description="Thioredoxin" evidence="3">
    <location>
        <begin position="71"/>
        <end position="264"/>
    </location>
</feature>
<feature type="disulfide bond" description="Redox-active" evidence="3">
    <location>
        <begin position="117"/>
        <end position="120"/>
    </location>
</feature>
<gene>
    <name type="ordered locus">RT0103</name>
</gene>
<proteinExistence type="inferred from homology"/>
<name>DSB_RICTY</name>
<sequence>MKNIFIVLIFLFLSSCAEVKAQDKQHEEQQIIEQEPLQNNETPQEANQESINSANTAKSVLHNHDNNQTESVLTQDLHEQKKTAITTKVTFKIDNNDMVLGNKKSNVIVVEYFSPTCPHCAYYHQTIFPALKKKYIDTNKIAYVVREFIATKQDLDAAILARCKGDINSFIQFHNIILQQQDKWAYSNKYRELLTDIGQLGGISPEEYKQCLNSDKITETLIANTNLVAKAPKFIGTPSFFVNGVQTENYSIDNISRAVDRALEDETKSK</sequence>
<comment type="function">
    <text evidence="1">May be required for disulfide bond formation in some proteins.</text>
</comment>
<comment type="subcellular location">
    <subcellularLocation>
        <location evidence="1">Periplasm</location>
    </subcellularLocation>
</comment>
<comment type="similarity">
    <text evidence="4">Belongs to the thioredoxin family. DsbA subfamily.</text>
</comment>
<accession>Q68XQ3</accession>
<organism>
    <name type="scientific">Rickettsia typhi (strain ATCC VR-144 / Wilmington)</name>
    <dbReference type="NCBI Taxonomy" id="257363"/>
    <lineage>
        <taxon>Bacteria</taxon>
        <taxon>Pseudomonadati</taxon>
        <taxon>Pseudomonadota</taxon>
        <taxon>Alphaproteobacteria</taxon>
        <taxon>Rickettsiales</taxon>
        <taxon>Rickettsiaceae</taxon>
        <taxon>Rickettsieae</taxon>
        <taxon>Rickettsia</taxon>
        <taxon>typhus group</taxon>
    </lineage>
</organism>
<dbReference type="EC" id="1.8.-.-"/>
<dbReference type="EMBL" id="AE017197">
    <property type="protein sequence ID" value="AAU03589.1"/>
    <property type="molecule type" value="Genomic_DNA"/>
</dbReference>
<dbReference type="RefSeq" id="WP_011190576.1">
    <property type="nucleotide sequence ID" value="NC_006142.1"/>
</dbReference>
<dbReference type="SMR" id="Q68XQ3"/>
<dbReference type="KEGG" id="rty:RT0103"/>
<dbReference type="eggNOG" id="COG1651">
    <property type="taxonomic scope" value="Bacteria"/>
</dbReference>
<dbReference type="HOGENOM" id="CLU_1022630_0_0_5"/>
<dbReference type="OrthoDB" id="8478320at2"/>
<dbReference type="Proteomes" id="UP000000604">
    <property type="component" value="Chromosome"/>
</dbReference>
<dbReference type="GO" id="GO:0042597">
    <property type="term" value="C:periplasmic space"/>
    <property type="evidence" value="ECO:0007669"/>
    <property type="project" value="UniProtKB-SubCell"/>
</dbReference>
<dbReference type="GO" id="GO:0015036">
    <property type="term" value="F:disulfide oxidoreductase activity"/>
    <property type="evidence" value="ECO:0007669"/>
    <property type="project" value="UniProtKB-ARBA"/>
</dbReference>
<dbReference type="CDD" id="cd02972">
    <property type="entry name" value="DsbA_family"/>
    <property type="match status" value="1"/>
</dbReference>
<dbReference type="Gene3D" id="3.40.30.10">
    <property type="entry name" value="Glutaredoxin"/>
    <property type="match status" value="1"/>
</dbReference>
<dbReference type="InterPro" id="IPR012336">
    <property type="entry name" value="Thioredoxin-like_fold"/>
</dbReference>
<dbReference type="InterPro" id="IPR036249">
    <property type="entry name" value="Thioredoxin-like_sf"/>
</dbReference>
<dbReference type="InterPro" id="IPR017937">
    <property type="entry name" value="Thioredoxin_CS"/>
</dbReference>
<dbReference type="InterPro" id="IPR013766">
    <property type="entry name" value="Thioredoxin_domain"/>
</dbReference>
<dbReference type="PANTHER" id="PTHR13887:SF14">
    <property type="entry name" value="DISULFIDE BOND FORMATION PROTEIN D"/>
    <property type="match status" value="1"/>
</dbReference>
<dbReference type="PANTHER" id="PTHR13887">
    <property type="entry name" value="GLUTATHIONE S-TRANSFERASE KAPPA"/>
    <property type="match status" value="1"/>
</dbReference>
<dbReference type="Pfam" id="PF13462">
    <property type="entry name" value="Thioredoxin_4"/>
    <property type="match status" value="1"/>
</dbReference>
<dbReference type="SUPFAM" id="SSF52833">
    <property type="entry name" value="Thioredoxin-like"/>
    <property type="match status" value="1"/>
</dbReference>
<dbReference type="PROSITE" id="PS00194">
    <property type="entry name" value="THIOREDOXIN_1"/>
    <property type="match status" value="1"/>
</dbReference>
<dbReference type="PROSITE" id="PS51352">
    <property type="entry name" value="THIOREDOXIN_2"/>
    <property type="match status" value="1"/>
</dbReference>
<keyword id="KW-1015">Disulfide bond</keyword>
<keyword id="KW-0560">Oxidoreductase</keyword>
<keyword id="KW-0574">Periplasm</keyword>
<keyword id="KW-0676">Redox-active center</keyword>
<keyword id="KW-0732">Signal</keyword>
<evidence type="ECO:0000250" key="1"/>
<evidence type="ECO:0000255" key="2"/>
<evidence type="ECO:0000255" key="3">
    <source>
        <dbReference type="PROSITE-ProRule" id="PRU00691"/>
    </source>
</evidence>
<evidence type="ECO:0000305" key="4"/>
<reference key="1">
    <citation type="journal article" date="2004" name="J. Bacteriol.">
        <title>Complete genome sequence of Rickettsia typhi and comparison with sequences of other Rickettsiae.</title>
        <authorList>
            <person name="McLeod M.P."/>
            <person name="Qin X."/>
            <person name="Karpathy S.E."/>
            <person name="Gioia J."/>
            <person name="Highlander S.K."/>
            <person name="Fox G.E."/>
            <person name="McNeill T.Z."/>
            <person name="Jiang H."/>
            <person name="Muzny D."/>
            <person name="Jacob L.S."/>
            <person name="Hawes A.C."/>
            <person name="Sodergren E."/>
            <person name="Gill R."/>
            <person name="Hume J."/>
            <person name="Morgan M."/>
            <person name="Fan G."/>
            <person name="Amin A.G."/>
            <person name="Gibbs R.A."/>
            <person name="Hong C."/>
            <person name="Yu X.-J."/>
            <person name="Walker D.H."/>
            <person name="Weinstock G.M."/>
        </authorList>
    </citation>
    <scope>NUCLEOTIDE SEQUENCE [LARGE SCALE GENOMIC DNA]</scope>
    <source>
        <strain>ATCC VR-144 / Wilmington</strain>
    </source>
</reference>
<protein>
    <recommendedName>
        <fullName>Putative protein-disulfide oxidoreductase RT0103</fullName>
        <ecNumber>1.8.-.-</ecNumber>
    </recommendedName>
</protein>